<sequence>MYKGLLKQYASYLPVNEKTPDVSLMEGNTPLIPLLNISKQLGVQLYGKYEGANPTGSFKDRGMVMAVAKAKEEGSEAIICASTGNTSASAAAYAARLGMKCIIVIPEGKIAHGKLAQAVAYGAEIISIEGNFDDALKAVRNIAAEEPITLVNSVNPYRIEGQKTAAFEICDQLQNAPDVLAIPVGNAGNITAYWKGFCEYEKEKGYKKPRIHGFEAEGAAAIVKGHVIEEPETIATAIRIGNPASWSYAVEAAEQSHGEIDMVSDEEILHAYRLLAKTEGVFAEPGSNASLAGVIKHVESGKIKKGETVVAVLTGNGLKDPDIAISSNQLDIASVSNDIEQIKDHIKGVIMS</sequence>
<keyword id="KW-0028">Amino-acid biosynthesis</keyword>
<keyword id="KW-0456">Lyase</keyword>
<keyword id="KW-0663">Pyridoxal phosphate</keyword>
<keyword id="KW-0791">Threonine biosynthesis</keyword>
<evidence type="ECO:0000250" key="1"/>
<evidence type="ECO:0000305" key="2"/>
<evidence type="ECO:0000305" key="3">
    <source>
    </source>
</evidence>
<protein>
    <recommendedName>
        <fullName>Threonine synthase</fullName>
        <shortName>TS</shortName>
        <ecNumber>4.2.3.1</ecNumber>
    </recommendedName>
</protein>
<feature type="chain" id="PRO_0000185625" description="Threonine synthase">
    <location>
        <begin position="1"/>
        <end position="352"/>
    </location>
</feature>
<feature type="binding site" evidence="1">
    <location>
        <position position="85"/>
    </location>
    <ligand>
        <name>pyridoxal 5'-phosphate</name>
        <dbReference type="ChEBI" id="CHEBI:597326"/>
    </ligand>
</feature>
<feature type="binding site" evidence="1">
    <location>
        <begin position="185"/>
        <end position="189"/>
    </location>
    <ligand>
        <name>pyridoxal 5'-phosphate</name>
        <dbReference type="ChEBI" id="CHEBI:597326"/>
    </ligand>
</feature>
<feature type="binding site" evidence="1">
    <location>
        <position position="314"/>
    </location>
    <ligand>
        <name>pyridoxal 5'-phosphate</name>
        <dbReference type="ChEBI" id="CHEBI:597326"/>
    </ligand>
</feature>
<feature type="modified residue" description="N6-(pyridoxal phosphate)lysine" evidence="1">
    <location>
        <position position="59"/>
    </location>
</feature>
<proteinExistence type="inferred from homology"/>
<name>THRC_BACSL</name>
<accession>P09123</accession>
<organism>
    <name type="scientific">Bacillus sp. (strain ULM1)</name>
    <dbReference type="NCBI Taxonomy" id="231717"/>
    <lineage>
        <taxon>Bacteria</taxon>
        <taxon>Bacillati</taxon>
        <taxon>Bacillota</taxon>
        <taxon>Bacilli</taxon>
        <taxon>Bacillales</taxon>
        <taxon>Bacillaceae</taxon>
        <taxon>Bacillus</taxon>
    </lineage>
</organism>
<comment type="function">
    <text evidence="1">Catalyzes the gamma-elimination of phosphate from L-phosphohomoserine and the beta-addition of water to produce L-threonine.</text>
</comment>
<comment type="catalytic activity">
    <reaction>
        <text>O-phospho-L-homoserine + H2O = L-threonine + phosphate</text>
        <dbReference type="Rhea" id="RHEA:10840"/>
        <dbReference type="ChEBI" id="CHEBI:15377"/>
        <dbReference type="ChEBI" id="CHEBI:43474"/>
        <dbReference type="ChEBI" id="CHEBI:57590"/>
        <dbReference type="ChEBI" id="CHEBI:57926"/>
        <dbReference type="EC" id="4.2.3.1"/>
    </reaction>
</comment>
<comment type="cofactor">
    <cofactor evidence="1">
        <name>pyridoxal 5'-phosphate</name>
        <dbReference type="ChEBI" id="CHEBI:597326"/>
    </cofactor>
</comment>
<comment type="pathway">
    <text>Amino-acid biosynthesis; L-threonine biosynthesis; L-threonine from L-aspartate: step 5/5.</text>
</comment>
<comment type="similarity">
    <text evidence="2">Belongs to the threonine synthase family.</text>
</comment>
<comment type="caution">
    <text evidence="3">Was originally thought to originate from B.lactofermentum=C.glutamicum.</text>
</comment>
<dbReference type="EC" id="4.2.3.1"/>
<dbReference type="EMBL" id="Z29562">
    <property type="protein sequence ID" value="CAA82669.1"/>
    <property type="molecule type" value="Genomic_DNA"/>
</dbReference>
<dbReference type="SMR" id="P09123"/>
<dbReference type="UniPathway" id="UPA00050">
    <property type="reaction ID" value="UER00065"/>
</dbReference>
<dbReference type="GO" id="GO:0003941">
    <property type="term" value="F:L-serine ammonia-lyase activity"/>
    <property type="evidence" value="ECO:0007669"/>
    <property type="project" value="TreeGrafter"/>
</dbReference>
<dbReference type="GO" id="GO:0030170">
    <property type="term" value="F:pyridoxal phosphate binding"/>
    <property type="evidence" value="ECO:0007669"/>
    <property type="project" value="InterPro"/>
</dbReference>
<dbReference type="GO" id="GO:0004794">
    <property type="term" value="F:threonine deaminase activity"/>
    <property type="evidence" value="ECO:0007669"/>
    <property type="project" value="TreeGrafter"/>
</dbReference>
<dbReference type="GO" id="GO:0004795">
    <property type="term" value="F:threonine synthase activity"/>
    <property type="evidence" value="ECO:0007669"/>
    <property type="project" value="UniProtKB-EC"/>
</dbReference>
<dbReference type="GO" id="GO:0009097">
    <property type="term" value="P:isoleucine biosynthetic process"/>
    <property type="evidence" value="ECO:0007669"/>
    <property type="project" value="TreeGrafter"/>
</dbReference>
<dbReference type="GO" id="GO:0006565">
    <property type="term" value="P:L-serine catabolic process"/>
    <property type="evidence" value="ECO:0007669"/>
    <property type="project" value="TreeGrafter"/>
</dbReference>
<dbReference type="GO" id="GO:0009088">
    <property type="term" value="P:threonine biosynthetic process"/>
    <property type="evidence" value="ECO:0007669"/>
    <property type="project" value="UniProtKB-UniPathway"/>
</dbReference>
<dbReference type="GO" id="GO:0006567">
    <property type="term" value="P:threonine catabolic process"/>
    <property type="evidence" value="ECO:0007669"/>
    <property type="project" value="TreeGrafter"/>
</dbReference>
<dbReference type="CDD" id="cd01563">
    <property type="entry name" value="Thr-synth_1"/>
    <property type="match status" value="1"/>
</dbReference>
<dbReference type="FunFam" id="3.40.50.1100:FF:000014">
    <property type="entry name" value="Threonine synthase"/>
    <property type="match status" value="1"/>
</dbReference>
<dbReference type="Gene3D" id="3.40.50.1100">
    <property type="match status" value="2"/>
</dbReference>
<dbReference type="InterPro" id="IPR050147">
    <property type="entry name" value="Ser/Thr_Dehydratase"/>
</dbReference>
<dbReference type="InterPro" id="IPR000634">
    <property type="entry name" value="Ser/Thr_deHydtase_PyrdxlP-BS"/>
</dbReference>
<dbReference type="InterPro" id="IPR004450">
    <property type="entry name" value="Thr_synthase-like"/>
</dbReference>
<dbReference type="InterPro" id="IPR026260">
    <property type="entry name" value="Thr_Synthase_bac/arc"/>
</dbReference>
<dbReference type="InterPro" id="IPR001926">
    <property type="entry name" value="TrpB-like_PALP"/>
</dbReference>
<dbReference type="InterPro" id="IPR036052">
    <property type="entry name" value="TrpB-like_PALP_sf"/>
</dbReference>
<dbReference type="NCBIfam" id="TIGR00260">
    <property type="entry name" value="thrC"/>
    <property type="match status" value="1"/>
</dbReference>
<dbReference type="PANTHER" id="PTHR48078:SF6">
    <property type="entry name" value="L-THREONINE DEHYDRATASE CATABOLIC TDCB"/>
    <property type="match status" value="1"/>
</dbReference>
<dbReference type="PANTHER" id="PTHR48078">
    <property type="entry name" value="THREONINE DEHYDRATASE, MITOCHONDRIAL-RELATED"/>
    <property type="match status" value="1"/>
</dbReference>
<dbReference type="Pfam" id="PF00291">
    <property type="entry name" value="PALP"/>
    <property type="match status" value="1"/>
</dbReference>
<dbReference type="PIRSF" id="PIRSF038945">
    <property type="entry name" value="Thr_synthase"/>
    <property type="match status" value="1"/>
</dbReference>
<dbReference type="SUPFAM" id="SSF53686">
    <property type="entry name" value="Tryptophan synthase beta subunit-like PLP-dependent enzymes"/>
    <property type="match status" value="1"/>
</dbReference>
<dbReference type="PROSITE" id="PS00165">
    <property type="entry name" value="DEHYDRATASE_SER_THR"/>
    <property type="match status" value="1"/>
</dbReference>
<gene>
    <name type="primary">thrC</name>
</gene>
<reference key="1">
    <citation type="journal article" date="1988" name="Nucleic Acids Res.">
        <title>Nucleotide sequence of the threonine synthase (thrC) gene of Brevibacterium lactofermentum.</title>
        <authorList>
            <person name="Malumbres M."/>
            <person name="Mateos L.M."/>
            <person name="Guerrero C."/>
            <person name="Martin J.F."/>
        </authorList>
    </citation>
    <scope>NUCLEOTIDE SEQUENCE [GENOMIC DNA]</scope>
</reference>
<reference key="2">
    <citation type="journal article" date="1995" name="Folia Microbiol. (Praha)">
        <title>Molecular cloning of the hom-thrC-thrB cluster from Bacillus sp. ULM1: expression of the thrC gene in Escherichia coli and corynebacteria, and evolutionary relationships of the threonine genes.</title>
        <authorList>
            <person name="Malumbres M."/>
            <person name="Mateos L.M."/>
            <person name="Guerrero C."/>
            <person name="Martin J.F."/>
        </authorList>
    </citation>
    <scope>NUCLEOTIDE SEQUENCE [GENOMIC DNA]</scope>
</reference>